<proteinExistence type="evidence at transcript level"/>
<protein>
    <recommendedName>
        <fullName>FBD-associated F-box protein At1g66310</fullName>
    </recommendedName>
</protein>
<keyword id="KW-1185">Reference proteome</keyword>
<gene>
    <name type="ordered locus">At1g66310</name>
    <name type="ORF">T27F4.6</name>
</gene>
<accession>Q9C8Y6</accession>
<reference key="1">
    <citation type="journal article" date="2000" name="Nature">
        <title>Sequence and analysis of chromosome 1 of the plant Arabidopsis thaliana.</title>
        <authorList>
            <person name="Theologis A."/>
            <person name="Ecker J.R."/>
            <person name="Palm C.J."/>
            <person name="Federspiel N.A."/>
            <person name="Kaul S."/>
            <person name="White O."/>
            <person name="Alonso J."/>
            <person name="Altafi H."/>
            <person name="Araujo R."/>
            <person name="Bowman C.L."/>
            <person name="Brooks S.Y."/>
            <person name="Buehler E."/>
            <person name="Chan A."/>
            <person name="Chao Q."/>
            <person name="Chen H."/>
            <person name="Cheuk R.F."/>
            <person name="Chin C.W."/>
            <person name="Chung M.K."/>
            <person name="Conn L."/>
            <person name="Conway A.B."/>
            <person name="Conway A.R."/>
            <person name="Creasy T.H."/>
            <person name="Dewar K."/>
            <person name="Dunn P."/>
            <person name="Etgu P."/>
            <person name="Feldblyum T.V."/>
            <person name="Feng J.-D."/>
            <person name="Fong B."/>
            <person name="Fujii C.Y."/>
            <person name="Gill J.E."/>
            <person name="Goldsmith A.D."/>
            <person name="Haas B."/>
            <person name="Hansen N.F."/>
            <person name="Hughes B."/>
            <person name="Huizar L."/>
            <person name="Hunter J.L."/>
            <person name="Jenkins J."/>
            <person name="Johnson-Hopson C."/>
            <person name="Khan S."/>
            <person name="Khaykin E."/>
            <person name="Kim C.J."/>
            <person name="Koo H.L."/>
            <person name="Kremenetskaia I."/>
            <person name="Kurtz D.B."/>
            <person name="Kwan A."/>
            <person name="Lam B."/>
            <person name="Langin-Hooper S."/>
            <person name="Lee A."/>
            <person name="Lee J.M."/>
            <person name="Lenz C.A."/>
            <person name="Li J.H."/>
            <person name="Li Y.-P."/>
            <person name="Lin X."/>
            <person name="Liu S.X."/>
            <person name="Liu Z.A."/>
            <person name="Luros J.S."/>
            <person name="Maiti R."/>
            <person name="Marziali A."/>
            <person name="Militscher J."/>
            <person name="Miranda M."/>
            <person name="Nguyen M."/>
            <person name="Nierman W.C."/>
            <person name="Osborne B.I."/>
            <person name="Pai G."/>
            <person name="Peterson J."/>
            <person name="Pham P.K."/>
            <person name="Rizzo M."/>
            <person name="Rooney T."/>
            <person name="Rowley D."/>
            <person name="Sakano H."/>
            <person name="Salzberg S.L."/>
            <person name="Schwartz J.R."/>
            <person name="Shinn P."/>
            <person name="Southwick A.M."/>
            <person name="Sun H."/>
            <person name="Tallon L.J."/>
            <person name="Tambunga G."/>
            <person name="Toriumi M.J."/>
            <person name="Town C.D."/>
            <person name="Utterback T."/>
            <person name="Van Aken S."/>
            <person name="Vaysberg M."/>
            <person name="Vysotskaia V.S."/>
            <person name="Walker M."/>
            <person name="Wu D."/>
            <person name="Yu G."/>
            <person name="Fraser C.M."/>
            <person name="Venter J.C."/>
            <person name="Davis R.W."/>
        </authorList>
    </citation>
    <scope>NUCLEOTIDE SEQUENCE [LARGE SCALE GENOMIC DNA]</scope>
    <source>
        <strain>cv. Columbia</strain>
    </source>
</reference>
<reference key="2">
    <citation type="journal article" date="2017" name="Plant J.">
        <title>Araport11: a complete reannotation of the Arabidopsis thaliana reference genome.</title>
        <authorList>
            <person name="Cheng C.Y."/>
            <person name="Krishnakumar V."/>
            <person name="Chan A.P."/>
            <person name="Thibaud-Nissen F."/>
            <person name="Schobel S."/>
            <person name="Town C.D."/>
        </authorList>
    </citation>
    <scope>GENOME REANNOTATION</scope>
    <source>
        <strain>cv. Columbia</strain>
    </source>
</reference>
<reference key="3">
    <citation type="submission" date="2005-05" db="EMBL/GenBank/DDBJ databases">
        <authorList>
            <person name="Underwood B.A."/>
            <person name="Xiao Y.-L."/>
            <person name="Moskal W.A. Jr."/>
            <person name="Monaghan E.L."/>
            <person name="Wang W."/>
            <person name="Redman J.C."/>
            <person name="Wu H.C."/>
            <person name="Utterback T."/>
            <person name="Town C.D."/>
        </authorList>
    </citation>
    <scope>NUCLEOTIDE SEQUENCE [LARGE SCALE MRNA]</scope>
    <source>
        <strain>cv. Columbia</strain>
    </source>
</reference>
<organism>
    <name type="scientific">Arabidopsis thaliana</name>
    <name type="common">Mouse-ear cress</name>
    <dbReference type="NCBI Taxonomy" id="3702"/>
    <lineage>
        <taxon>Eukaryota</taxon>
        <taxon>Viridiplantae</taxon>
        <taxon>Streptophyta</taxon>
        <taxon>Embryophyta</taxon>
        <taxon>Tracheophyta</taxon>
        <taxon>Spermatophyta</taxon>
        <taxon>Magnoliopsida</taxon>
        <taxon>eudicotyledons</taxon>
        <taxon>Gunneridae</taxon>
        <taxon>Pentapetalae</taxon>
        <taxon>rosids</taxon>
        <taxon>malvids</taxon>
        <taxon>Brassicales</taxon>
        <taxon>Brassicaceae</taxon>
        <taxon>Camelineae</taxon>
        <taxon>Arabidopsis</taxon>
    </lineage>
</organism>
<sequence length="442" mass="50198">MDQDGEKRVRAKQSDDEVDWLRDLPESLLCHILLNLPTKDVVKTSVLSSKWRNLWRLVPGLDLDSSDFTENNTFVSFIDRFMSFHSDLYLKKFKLRFFCNLNGDEVSENAHIARWINDVVKRKVHNLDLTWGAVEIPPILYLCNSLVSLKLCGVTLPNLELTSLPCVKVIVLEWVKFANDLALEMLISGCLVLESLTLCRRPNDNVKILRVSSQSLLRFSYNGSSYKGLHDDLVLEINAPKLKILKLFSHQLTTSFIRNTSSSIVEADINIGLGKKFDPKDLPKRNVICNFLAGISSVKNLFIAPCTLEVIYDYSRCEPLPLFCNLSYLSVDFYNNSWEILPIFLESCPNLKSLVVGSITSPKRRTSVLSGPRRLLSSLEYVEIESPLTGEVFEMKLVSYLLENSPILKKLTINLDDSSRKKAECELLTIPRRSTSCQVVVL</sequence>
<name>FBD5_ARATH</name>
<dbReference type="EMBL" id="AC020665">
    <property type="protein sequence ID" value="AAG52163.1"/>
    <property type="molecule type" value="Genomic_DNA"/>
</dbReference>
<dbReference type="EMBL" id="CP002684">
    <property type="protein sequence ID" value="AEE34493.1"/>
    <property type="molecule type" value="Genomic_DNA"/>
</dbReference>
<dbReference type="EMBL" id="DQ056512">
    <property type="protein sequence ID" value="AAY78669.1"/>
    <property type="molecule type" value="mRNA"/>
</dbReference>
<dbReference type="PIR" id="C96688">
    <property type="entry name" value="C96688"/>
</dbReference>
<dbReference type="RefSeq" id="NP_176805.1">
    <property type="nucleotide sequence ID" value="NM_105302.1"/>
</dbReference>
<dbReference type="SMR" id="Q9C8Y6"/>
<dbReference type="BioGRID" id="28169">
    <property type="interactions" value="3"/>
</dbReference>
<dbReference type="FunCoup" id="Q9C8Y6">
    <property type="interactions" value="5"/>
</dbReference>
<dbReference type="STRING" id="3702.Q9C8Y6"/>
<dbReference type="PaxDb" id="3702-AT1G66310.1"/>
<dbReference type="EnsemblPlants" id="AT1G66310.1">
    <property type="protein sequence ID" value="AT1G66310.1"/>
    <property type="gene ID" value="AT1G66310"/>
</dbReference>
<dbReference type="GeneID" id="842948"/>
<dbReference type="Gramene" id="AT1G66310.1">
    <property type="protein sequence ID" value="AT1G66310.1"/>
    <property type="gene ID" value="AT1G66310"/>
</dbReference>
<dbReference type="KEGG" id="ath:AT1G66310"/>
<dbReference type="Araport" id="AT1G66310"/>
<dbReference type="TAIR" id="AT1G66310"/>
<dbReference type="HOGENOM" id="CLU_010721_1_3_1"/>
<dbReference type="InParanoid" id="Q9C8Y6"/>
<dbReference type="OMA" id="KFGGCEF"/>
<dbReference type="PhylomeDB" id="Q9C8Y6"/>
<dbReference type="PRO" id="PR:Q9C8Y6"/>
<dbReference type="Proteomes" id="UP000006548">
    <property type="component" value="Chromosome 1"/>
</dbReference>
<dbReference type="ExpressionAtlas" id="Q9C8Y6">
    <property type="expression patterns" value="baseline and differential"/>
</dbReference>
<dbReference type="CDD" id="cd22160">
    <property type="entry name" value="F-box_AtFBL13-like"/>
    <property type="match status" value="1"/>
</dbReference>
<dbReference type="Gene3D" id="3.80.10.10">
    <property type="entry name" value="Ribonuclease Inhibitor"/>
    <property type="match status" value="1"/>
</dbReference>
<dbReference type="InterPro" id="IPR036047">
    <property type="entry name" value="F-box-like_dom_sf"/>
</dbReference>
<dbReference type="InterPro" id="IPR053781">
    <property type="entry name" value="F-box_AtFBL13-like"/>
</dbReference>
<dbReference type="InterPro" id="IPR001810">
    <property type="entry name" value="F-box_dom"/>
</dbReference>
<dbReference type="InterPro" id="IPR006566">
    <property type="entry name" value="FBD"/>
</dbReference>
<dbReference type="InterPro" id="IPR050232">
    <property type="entry name" value="FBL13/AtMIF1-like"/>
</dbReference>
<dbReference type="InterPro" id="IPR032675">
    <property type="entry name" value="LRR_dom_sf"/>
</dbReference>
<dbReference type="InterPro" id="IPR055411">
    <property type="entry name" value="LRR_FXL15/At3g58940/PEG3-like"/>
</dbReference>
<dbReference type="PANTHER" id="PTHR31900">
    <property type="entry name" value="F-BOX/RNI SUPERFAMILY PROTEIN-RELATED"/>
    <property type="match status" value="1"/>
</dbReference>
<dbReference type="PANTHER" id="PTHR31900:SF33">
    <property type="entry name" value="PROTEIN WITH RNI-LIKE_FBD-LIKE DOMAIN"/>
    <property type="match status" value="1"/>
</dbReference>
<dbReference type="Pfam" id="PF00646">
    <property type="entry name" value="F-box"/>
    <property type="match status" value="1"/>
</dbReference>
<dbReference type="Pfam" id="PF08387">
    <property type="entry name" value="FBD"/>
    <property type="match status" value="1"/>
</dbReference>
<dbReference type="Pfam" id="PF24758">
    <property type="entry name" value="LRR_At5g56370"/>
    <property type="match status" value="1"/>
</dbReference>
<dbReference type="SMART" id="SM00579">
    <property type="entry name" value="FBD"/>
    <property type="match status" value="1"/>
</dbReference>
<dbReference type="SMART" id="SM00256">
    <property type="entry name" value="FBOX"/>
    <property type="match status" value="1"/>
</dbReference>
<dbReference type="SUPFAM" id="SSF81383">
    <property type="entry name" value="F-box domain"/>
    <property type="match status" value="1"/>
</dbReference>
<dbReference type="SUPFAM" id="SSF52047">
    <property type="entry name" value="RNI-like"/>
    <property type="match status" value="1"/>
</dbReference>
<dbReference type="PROSITE" id="PS50181">
    <property type="entry name" value="FBOX"/>
    <property type="match status" value="1"/>
</dbReference>
<feature type="chain" id="PRO_0000283138" description="FBD-associated F-box protein At1g66310">
    <location>
        <begin position="1"/>
        <end position="442"/>
    </location>
</feature>
<feature type="domain" description="F-box" evidence="1">
    <location>
        <begin position="18"/>
        <end position="64"/>
    </location>
</feature>
<feature type="domain" description="FBD">
    <location>
        <begin position="363"/>
        <end position="415"/>
    </location>
</feature>
<evidence type="ECO:0000255" key="1">
    <source>
        <dbReference type="PROSITE-ProRule" id="PRU00080"/>
    </source>
</evidence>